<reference key="1">
    <citation type="journal article" date="2002" name="Nature">
        <title>The genome sequence of Schizosaccharomyces pombe.</title>
        <authorList>
            <person name="Wood V."/>
            <person name="Gwilliam R."/>
            <person name="Rajandream M.A."/>
            <person name="Lyne M.H."/>
            <person name="Lyne R."/>
            <person name="Stewart A."/>
            <person name="Sgouros J.G."/>
            <person name="Peat N."/>
            <person name="Hayles J."/>
            <person name="Baker S.G."/>
            <person name="Basham D."/>
            <person name="Bowman S."/>
            <person name="Brooks K."/>
            <person name="Brown D."/>
            <person name="Brown S."/>
            <person name="Chillingworth T."/>
            <person name="Churcher C.M."/>
            <person name="Collins M."/>
            <person name="Connor R."/>
            <person name="Cronin A."/>
            <person name="Davis P."/>
            <person name="Feltwell T."/>
            <person name="Fraser A."/>
            <person name="Gentles S."/>
            <person name="Goble A."/>
            <person name="Hamlin N."/>
            <person name="Harris D.E."/>
            <person name="Hidalgo J."/>
            <person name="Hodgson G."/>
            <person name="Holroyd S."/>
            <person name="Hornsby T."/>
            <person name="Howarth S."/>
            <person name="Huckle E.J."/>
            <person name="Hunt S."/>
            <person name="Jagels K."/>
            <person name="James K.D."/>
            <person name="Jones L."/>
            <person name="Jones M."/>
            <person name="Leather S."/>
            <person name="McDonald S."/>
            <person name="McLean J."/>
            <person name="Mooney P."/>
            <person name="Moule S."/>
            <person name="Mungall K.L."/>
            <person name="Murphy L.D."/>
            <person name="Niblett D."/>
            <person name="Odell C."/>
            <person name="Oliver K."/>
            <person name="O'Neil S."/>
            <person name="Pearson D."/>
            <person name="Quail M.A."/>
            <person name="Rabbinowitsch E."/>
            <person name="Rutherford K.M."/>
            <person name="Rutter S."/>
            <person name="Saunders D."/>
            <person name="Seeger K."/>
            <person name="Sharp S."/>
            <person name="Skelton J."/>
            <person name="Simmonds M.N."/>
            <person name="Squares R."/>
            <person name="Squares S."/>
            <person name="Stevens K."/>
            <person name="Taylor K."/>
            <person name="Taylor R.G."/>
            <person name="Tivey A."/>
            <person name="Walsh S.V."/>
            <person name="Warren T."/>
            <person name="Whitehead S."/>
            <person name="Woodward J.R."/>
            <person name="Volckaert G."/>
            <person name="Aert R."/>
            <person name="Robben J."/>
            <person name="Grymonprez B."/>
            <person name="Weltjens I."/>
            <person name="Vanstreels E."/>
            <person name="Rieger M."/>
            <person name="Schaefer M."/>
            <person name="Mueller-Auer S."/>
            <person name="Gabel C."/>
            <person name="Fuchs M."/>
            <person name="Duesterhoeft A."/>
            <person name="Fritzc C."/>
            <person name="Holzer E."/>
            <person name="Moestl D."/>
            <person name="Hilbert H."/>
            <person name="Borzym K."/>
            <person name="Langer I."/>
            <person name="Beck A."/>
            <person name="Lehrach H."/>
            <person name="Reinhardt R."/>
            <person name="Pohl T.M."/>
            <person name="Eger P."/>
            <person name="Zimmermann W."/>
            <person name="Wedler H."/>
            <person name="Wambutt R."/>
            <person name="Purnelle B."/>
            <person name="Goffeau A."/>
            <person name="Cadieu E."/>
            <person name="Dreano S."/>
            <person name="Gloux S."/>
            <person name="Lelaure V."/>
            <person name="Mottier S."/>
            <person name="Galibert F."/>
            <person name="Aves S.J."/>
            <person name="Xiang Z."/>
            <person name="Hunt C."/>
            <person name="Moore K."/>
            <person name="Hurst S.M."/>
            <person name="Lucas M."/>
            <person name="Rochet M."/>
            <person name="Gaillardin C."/>
            <person name="Tallada V.A."/>
            <person name="Garzon A."/>
            <person name="Thode G."/>
            <person name="Daga R.R."/>
            <person name="Cruzado L."/>
            <person name="Jimenez J."/>
            <person name="Sanchez M."/>
            <person name="del Rey F."/>
            <person name="Benito J."/>
            <person name="Dominguez A."/>
            <person name="Revuelta J.L."/>
            <person name="Moreno S."/>
            <person name="Armstrong J."/>
            <person name="Forsburg S.L."/>
            <person name="Cerutti L."/>
            <person name="Lowe T."/>
            <person name="McCombie W.R."/>
            <person name="Paulsen I."/>
            <person name="Potashkin J."/>
            <person name="Shpakovski G.V."/>
            <person name="Ussery D."/>
            <person name="Barrell B.G."/>
            <person name="Nurse P."/>
        </authorList>
    </citation>
    <scope>NUCLEOTIDE SEQUENCE [LARGE SCALE GENOMIC DNA]</scope>
    <source>
        <strain>972 / ATCC 24843</strain>
    </source>
</reference>
<reference key="2">
    <citation type="journal article" date="2006" name="Biochem. J.">
        <title>Identification of a novel NADH-specific aldo-keto reductase using sequence and structural homologies.</title>
        <authorList>
            <person name="Di Luccio E."/>
            <person name="Elling R.A."/>
            <person name="Wilson D.K."/>
        </authorList>
    </citation>
    <scope>CATALYTIC ACTIVITY</scope>
    <scope>SUBUNIT</scope>
    <scope>MUTAGENESIS OF ASP-202</scope>
    <scope>BIOPHYSICOCHEMICAL PROPERTIES</scope>
</reference>
<reference key="3">
    <citation type="journal article" date="2006" name="Nat. Biotechnol.">
        <title>ORFeome cloning and global analysis of protein localization in the fission yeast Schizosaccharomyces pombe.</title>
        <authorList>
            <person name="Matsuyama A."/>
            <person name="Arai R."/>
            <person name="Yashiroda Y."/>
            <person name="Shirai A."/>
            <person name="Kamata A."/>
            <person name="Sekido S."/>
            <person name="Kobayashi Y."/>
            <person name="Hashimoto A."/>
            <person name="Hamamoto M."/>
            <person name="Hiraoka Y."/>
            <person name="Horinouchi S."/>
            <person name="Yoshida M."/>
        </authorList>
    </citation>
    <scope>SUBCELLULAR LOCATION [LARGE SCALE ANALYSIS]</scope>
</reference>
<comment type="catalytic activity">
    <reaction evidence="2">
        <text>indole-3-ethanol + NAD(+) = indole-3-acetaldehyde + NADH + H(+)</text>
        <dbReference type="Rhea" id="RHEA:14873"/>
        <dbReference type="ChEBI" id="CHEBI:15378"/>
        <dbReference type="ChEBI" id="CHEBI:17890"/>
        <dbReference type="ChEBI" id="CHEBI:18086"/>
        <dbReference type="ChEBI" id="CHEBI:57540"/>
        <dbReference type="ChEBI" id="CHEBI:57945"/>
        <dbReference type="EC" id="1.1.1.190"/>
    </reaction>
</comment>
<comment type="catalytic activity">
    <reaction evidence="2">
        <text>indole-3-ethanol + NADP(+) = indole-3-acetaldehyde + NADPH + H(+)</text>
        <dbReference type="Rhea" id="RHEA:17037"/>
        <dbReference type="ChEBI" id="CHEBI:15378"/>
        <dbReference type="ChEBI" id="CHEBI:17890"/>
        <dbReference type="ChEBI" id="CHEBI:18086"/>
        <dbReference type="ChEBI" id="CHEBI:57783"/>
        <dbReference type="ChEBI" id="CHEBI:58349"/>
        <dbReference type="EC" id="1.1.1.191"/>
    </reaction>
</comment>
<comment type="biophysicochemical properties">
    <kinetics>
        <KM evidence="2">34 uM for NADP</KM>
        <KM evidence="2">53.3 uM for NAD</KM>
    </kinetics>
</comment>
<comment type="subunit">
    <text evidence="2">Monomer.</text>
</comment>
<comment type="subcellular location">
    <subcellularLocation>
        <location evidence="3">Cytoplasm</location>
    </subcellularLocation>
    <subcellularLocation>
        <location evidence="3">Nucleus</location>
    </subcellularLocation>
</comment>
<comment type="similarity">
    <text evidence="4">Belongs to the aldo/keto reductase family.</text>
</comment>
<protein>
    <recommendedName>
        <fullName>NAD/NADP-dependent indole-3-acetaldehyde reductase</fullName>
        <ecNumber evidence="2">1.1.1.190</ecNumber>
        <ecNumber evidence="2">1.1.1.191</ecNumber>
    </recommendedName>
    <alternativeName>
        <fullName>AKR3C2</fullName>
    </alternativeName>
</protein>
<keyword id="KW-0963">Cytoplasm</keyword>
<keyword id="KW-0520">NAD</keyword>
<keyword id="KW-0521">NADP</keyword>
<keyword id="KW-0539">Nucleus</keyword>
<keyword id="KW-0560">Oxidoreductase</keyword>
<keyword id="KW-1185">Reference proteome</keyword>
<feature type="chain" id="PRO_0000339120" description="NAD/NADP-dependent indole-3-acetaldehyde reductase">
    <location>
        <begin position="1"/>
        <end position="284"/>
    </location>
</feature>
<feature type="active site" description="Proton donor" evidence="1">
    <location>
        <position position="54"/>
    </location>
</feature>
<feature type="active site" description="Proton donor" evidence="1">
    <location>
        <position position="109"/>
    </location>
</feature>
<feature type="binding site" evidence="1">
    <location>
        <position position="49"/>
    </location>
    <ligand>
        <name>NADPH</name>
        <dbReference type="ChEBI" id="CHEBI:57783"/>
    </ligand>
</feature>
<feature type="binding site" evidence="1">
    <location>
        <position position="143"/>
    </location>
    <ligand>
        <name>NADPH</name>
        <dbReference type="ChEBI" id="CHEBI:57783"/>
    </ligand>
</feature>
<feature type="binding site" evidence="1">
    <location>
        <position position="165"/>
    </location>
    <ligand>
        <name>NADPH</name>
        <dbReference type="ChEBI" id="CHEBI:57783"/>
    </ligand>
</feature>
<feature type="binding site" evidence="1">
    <location>
        <position position="196"/>
    </location>
    <ligand>
        <name>NADPH</name>
        <dbReference type="ChEBI" id="CHEBI:57783"/>
    </ligand>
</feature>
<feature type="binding site" evidence="1">
    <location>
        <position position="201"/>
    </location>
    <ligand>
        <name>NADPH</name>
        <dbReference type="ChEBI" id="CHEBI:57783"/>
    </ligand>
</feature>
<feature type="binding site" evidence="1">
    <location>
        <position position="239"/>
    </location>
    <ligand>
        <name>NADPH</name>
        <dbReference type="ChEBI" id="CHEBI:57783"/>
    </ligand>
</feature>
<feature type="binding site" evidence="1">
    <location>
        <position position="240"/>
    </location>
    <ligand>
        <name>NADPH</name>
        <dbReference type="ChEBI" id="CHEBI:57783"/>
    </ligand>
</feature>
<feature type="binding site" evidence="1">
    <location>
        <position position="241"/>
    </location>
    <ligand>
        <name>NADPH</name>
        <dbReference type="ChEBI" id="CHEBI:57783"/>
    </ligand>
</feature>
<feature type="binding site" evidence="1">
    <location>
        <position position="242"/>
    </location>
    <ligand>
        <name>NADPH</name>
        <dbReference type="ChEBI" id="CHEBI:57783"/>
    </ligand>
</feature>
<feature type="binding site" evidence="1">
    <location>
        <position position="243"/>
    </location>
    <ligand>
        <name>NADPH</name>
        <dbReference type="ChEBI" id="CHEBI:57783"/>
    </ligand>
</feature>
<feature type="binding site" evidence="1">
    <location>
        <position position="246"/>
    </location>
    <ligand>
        <name>NADPH</name>
        <dbReference type="ChEBI" id="CHEBI:57783"/>
    </ligand>
</feature>
<feature type="site" description="Lowers pKa of active site Tyr" evidence="1">
    <location>
        <position position="79"/>
    </location>
</feature>
<feature type="mutagenesis site" description="2-fold increase of activity with NADH; no activity with NADPH." evidence="2">
    <original>D</original>
    <variation>S</variation>
    <location>
        <position position="202"/>
    </location>
</feature>
<name>I3ACR_SCHPO</name>
<sequence length="284" mass="31570">MLIAAMGPKIPVPAYGVGTALFKKEKGEINRTIVDSVKNALAAGFIHIDCAEVYGNEEEVGVALKEANVPRSKLFITSKVMHNVDNIPEALNESLRKLGTDYLDLYLLHSPIPFYEKKIPISEGWKAMETALGTGLVHSVGVSNFRIPDLEELLKTSTITPRVNQIEFHPQVYKAAKPLVEFCQSKGIIVEGYGPLSPLVRDAQGPVAEFTKSLESKYHVSDTQILLKWAYSKGVIPITTTSKIERMKECLNFDSFTLDKADIDELGTLGVQHHKRTFMKHMDE</sequence>
<accession>O13848</accession>
<gene>
    <name type="ORF">SPAC19G12.09</name>
</gene>
<dbReference type="EC" id="1.1.1.190" evidence="2"/>
<dbReference type="EC" id="1.1.1.191" evidence="2"/>
<dbReference type="EMBL" id="CU329670">
    <property type="protein sequence ID" value="CAB10120.1"/>
    <property type="molecule type" value="Genomic_DNA"/>
</dbReference>
<dbReference type="PIR" id="T37996">
    <property type="entry name" value="T37996"/>
</dbReference>
<dbReference type="RefSeq" id="NP_594424.1">
    <property type="nucleotide sequence ID" value="NM_001019853.2"/>
</dbReference>
<dbReference type="SMR" id="O13848"/>
<dbReference type="BioGRID" id="278943">
    <property type="interactions" value="1"/>
</dbReference>
<dbReference type="FunCoup" id="O13848">
    <property type="interactions" value="303"/>
</dbReference>
<dbReference type="STRING" id="284812.O13848"/>
<dbReference type="iPTMnet" id="O13848"/>
<dbReference type="PaxDb" id="4896-SPAC19G12.09.1"/>
<dbReference type="EnsemblFungi" id="SPAC19G12.09.1">
    <property type="protein sequence ID" value="SPAC19G12.09.1:pep"/>
    <property type="gene ID" value="SPAC19G12.09"/>
</dbReference>
<dbReference type="KEGG" id="spo:2542483"/>
<dbReference type="PomBase" id="SPAC19G12.09"/>
<dbReference type="VEuPathDB" id="FungiDB:SPAC19G12.09"/>
<dbReference type="eggNOG" id="KOG1577">
    <property type="taxonomic scope" value="Eukaryota"/>
</dbReference>
<dbReference type="HOGENOM" id="CLU_023205_0_3_1"/>
<dbReference type="InParanoid" id="O13848"/>
<dbReference type="OMA" id="IGTGTRW"/>
<dbReference type="PhylomeDB" id="O13848"/>
<dbReference type="Reactome" id="R-SPO-156590">
    <property type="pathway name" value="Glutathione conjugation"/>
</dbReference>
<dbReference type="Reactome" id="R-SPO-193144">
    <property type="pathway name" value="Estrogen biosynthesis"/>
</dbReference>
<dbReference type="Reactome" id="R-SPO-193368">
    <property type="pathway name" value="Synthesis of bile acids and bile salts via 7alpha-hydroxycholesterol"/>
</dbReference>
<dbReference type="Reactome" id="R-SPO-193775">
    <property type="pathway name" value="Synthesis of bile acids and bile salts via 24-hydroxycholesterol"/>
</dbReference>
<dbReference type="Reactome" id="R-SPO-193807">
    <property type="pathway name" value="Synthesis of bile acids and bile salts via 27-hydroxycholesterol"/>
</dbReference>
<dbReference type="Reactome" id="R-SPO-2162123">
    <property type="pathway name" value="Synthesis of Prostaglandins (PG) and Thromboxanes (TX)"/>
</dbReference>
<dbReference type="Reactome" id="R-SPO-5365859">
    <property type="pathway name" value="RA biosynthesis pathway"/>
</dbReference>
<dbReference type="Reactome" id="R-SPO-5661270">
    <property type="pathway name" value="Formation of xylulose-5-phosphate"/>
</dbReference>
<dbReference type="Reactome" id="R-SPO-9757110">
    <property type="pathway name" value="Prednisone ADME"/>
</dbReference>
<dbReference type="SABIO-RK" id="O13848"/>
<dbReference type="PRO" id="PR:O13848"/>
<dbReference type="Proteomes" id="UP000002485">
    <property type="component" value="Chromosome I"/>
</dbReference>
<dbReference type="GO" id="GO:0005829">
    <property type="term" value="C:cytosol"/>
    <property type="evidence" value="ECO:0007005"/>
    <property type="project" value="PomBase"/>
</dbReference>
<dbReference type="GO" id="GO:0005634">
    <property type="term" value="C:nucleus"/>
    <property type="evidence" value="ECO:0007005"/>
    <property type="project" value="PomBase"/>
</dbReference>
<dbReference type="GO" id="GO:0004032">
    <property type="term" value="F:aldose reductase (NADPH) activity"/>
    <property type="evidence" value="ECO:0000318"/>
    <property type="project" value="GO_Central"/>
</dbReference>
<dbReference type="GO" id="GO:0051268">
    <property type="term" value="F:alpha-keto amide reductase activity"/>
    <property type="evidence" value="ECO:0000266"/>
    <property type="project" value="PomBase"/>
</dbReference>
<dbReference type="GO" id="GO:0051269">
    <property type="term" value="F:alpha-ketoester reductase (NADPH) activity"/>
    <property type="evidence" value="ECO:0000266"/>
    <property type="project" value="PomBase"/>
</dbReference>
<dbReference type="GO" id="GO:0047018">
    <property type="term" value="F:indole-3-acetaldehyde reductase (NADH) activity"/>
    <property type="evidence" value="ECO:0000314"/>
    <property type="project" value="PomBase"/>
</dbReference>
<dbReference type="GO" id="GO:0047019">
    <property type="term" value="F:indole-3-acetaldehyde reductase (NADPH) activity"/>
    <property type="evidence" value="ECO:0000314"/>
    <property type="project" value="PomBase"/>
</dbReference>
<dbReference type="GO" id="GO:0016652">
    <property type="term" value="F:oxidoreductase activity, acting on NAD(P)H as acceptor"/>
    <property type="evidence" value="ECO:0000314"/>
    <property type="project" value="PomBase"/>
</dbReference>
<dbReference type="CDD" id="cd19120">
    <property type="entry name" value="AKR_AKR3C2-3"/>
    <property type="match status" value="1"/>
</dbReference>
<dbReference type="FunFam" id="3.20.20.100:FF:000044">
    <property type="entry name" value="Aldose reductase"/>
    <property type="match status" value="1"/>
</dbReference>
<dbReference type="Gene3D" id="3.20.20.100">
    <property type="entry name" value="NADP-dependent oxidoreductase domain"/>
    <property type="match status" value="1"/>
</dbReference>
<dbReference type="InterPro" id="IPR020471">
    <property type="entry name" value="AKR"/>
</dbReference>
<dbReference type="InterPro" id="IPR044494">
    <property type="entry name" value="AKR3C2/3"/>
</dbReference>
<dbReference type="InterPro" id="IPR023210">
    <property type="entry name" value="NADP_OxRdtase_dom"/>
</dbReference>
<dbReference type="InterPro" id="IPR036812">
    <property type="entry name" value="NADP_OxRdtase_dom_sf"/>
</dbReference>
<dbReference type="PANTHER" id="PTHR43827">
    <property type="entry name" value="2,5-DIKETO-D-GLUCONIC ACID REDUCTASE"/>
    <property type="match status" value="1"/>
</dbReference>
<dbReference type="PANTHER" id="PTHR43827:SF3">
    <property type="entry name" value="NADP-DEPENDENT OXIDOREDUCTASE DOMAIN-CONTAINING PROTEIN"/>
    <property type="match status" value="1"/>
</dbReference>
<dbReference type="Pfam" id="PF00248">
    <property type="entry name" value="Aldo_ket_red"/>
    <property type="match status" value="1"/>
</dbReference>
<dbReference type="PIRSF" id="PIRSF000097">
    <property type="entry name" value="AKR"/>
    <property type="match status" value="1"/>
</dbReference>
<dbReference type="PRINTS" id="PR00069">
    <property type="entry name" value="ALDKETRDTASE"/>
</dbReference>
<dbReference type="SUPFAM" id="SSF51430">
    <property type="entry name" value="NAD(P)-linked oxidoreductase"/>
    <property type="match status" value="1"/>
</dbReference>
<proteinExistence type="evidence at protein level"/>
<organism>
    <name type="scientific">Schizosaccharomyces pombe (strain 972 / ATCC 24843)</name>
    <name type="common">Fission yeast</name>
    <dbReference type="NCBI Taxonomy" id="284812"/>
    <lineage>
        <taxon>Eukaryota</taxon>
        <taxon>Fungi</taxon>
        <taxon>Dikarya</taxon>
        <taxon>Ascomycota</taxon>
        <taxon>Taphrinomycotina</taxon>
        <taxon>Schizosaccharomycetes</taxon>
        <taxon>Schizosaccharomycetales</taxon>
        <taxon>Schizosaccharomycetaceae</taxon>
        <taxon>Schizosaccharomyces</taxon>
    </lineage>
</organism>
<evidence type="ECO:0000250" key="1">
    <source>
        <dbReference type="UniProtKB" id="Q76L36"/>
    </source>
</evidence>
<evidence type="ECO:0000269" key="2">
    <source>
    </source>
</evidence>
<evidence type="ECO:0000269" key="3">
    <source>
    </source>
</evidence>
<evidence type="ECO:0000305" key="4"/>